<protein>
    <recommendedName>
        <fullName evidence="1">NADH-quinone oxidoreductase subunit H</fullName>
        <ecNumber evidence="1">7.1.1.-</ecNumber>
    </recommendedName>
    <alternativeName>
        <fullName evidence="1">NADH dehydrogenase I subunit H</fullName>
    </alternativeName>
    <alternativeName>
        <fullName evidence="1">NDH-1 subunit H</fullName>
    </alternativeName>
</protein>
<evidence type="ECO:0000255" key="1">
    <source>
        <dbReference type="HAMAP-Rule" id="MF_01350"/>
    </source>
</evidence>
<accession>Q68VV3</accession>
<name>NUOH_RICTY</name>
<sequence length="339" mass="37923">MIELFYEYMFPLTVIALKVVAITIPLILCVAYLTYAERRVIGLMQLRRGPNVVGPFGLLQPIADAVKLLFKEPIIPTNADKILFILAPIITFVLSLIGWAVIPFAKGVVLADINVGVLYILAISSLSVYGIIIAGWASNSKYAFLGAIRSSAQMISYEVSIGLVIVTVLLTTGTLNLSRIIEAQKTLPWWIDLMLLPMSIVFFISVLAETNRLPFDLPEAESELVAGYNVEYSSMGFALFFLGEYANMILVSAMTTTFFLGGYLPPFNLPFLDCIPGFFWFVLKVMLLLFCFLWIRATLPRYRYDQLMRLGWKVFLPLTLFGVVLVSSVLFYTDNLPSV</sequence>
<feature type="chain" id="PRO_0000240108" description="NADH-quinone oxidoreductase subunit H">
    <location>
        <begin position="1"/>
        <end position="339"/>
    </location>
</feature>
<feature type="transmembrane region" description="Helical" evidence="1">
    <location>
        <begin position="10"/>
        <end position="30"/>
    </location>
</feature>
<feature type="transmembrane region" description="Helical" evidence="1">
    <location>
        <begin position="50"/>
        <end position="70"/>
    </location>
</feature>
<feature type="transmembrane region" description="Helical" evidence="1">
    <location>
        <begin position="82"/>
        <end position="102"/>
    </location>
</feature>
<feature type="transmembrane region" description="Helical" evidence="1">
    <location>
        <begin position="115"/>
        <end position="135"/>
    </location>
</feature>
<feature type="transmembrane region" description="Helical" evidence="1">
    <location>
        <begin position="155"/>
        <end position="175"/>
    </location>
</feature>
<feature type="transmembrane region" description="Helical" evidence="1">
    <location>
        <begin position="187"/>
        <end position="207"/>
    </location>
</feature>
<feature type="transmembrane region" description="Helical" evidence="1">
    <location>
        <begin position="235"/>
        <end position="255"/>
    </location>
</feature>
<feature type="transmembrane region" description="Helical" evidence="1">
    <location>
        <begin position="275"/>
        <end position="295"/>
    </location>
</feature>
<feature type="transmembrane region" description="Helical" evidence="1">
    <location>
        <begin position="311"/>
        <end position="331"/>
    </location>
</feature>
<dbReference type="EC" id="7.1.1.-" evidence="1"/>
<dbReference type="EMBL" id="AE017197">
    <property type="protein sequence ID" value="AAU04239.1"/>
    <property type="molecule type" value="Genomic_DNA"/>
</dbReference>
<dbReference type="RefSeq" id="WP_011191214.1">
    <property type="nucleotide sequence ID" value="NC_006142.1"/>
</dbReference>
<dbReference type="SMR" id="Q68VV3"/>
<dbReference type="KEGG" id="rty:RT0783"/>
<dbReference type="eggNOG" id="COG1005">
    <property type="taxonomic scope" value="Bacteria"/>
</dbReference>
<dbReference type="HOGENOM" id="CLU_015134_0_1_5"/>
<dbReference type="OrthoDB" id="9803734at2"/>
<dbReference type="Proteomes" id="UP000000604">
    <property type="component" value="Chromosome"/>
</dbReference>
<dbReference type="GO" id="GO:0005886">
    <property type="term" value="C:plasma membrane"/>
    <property type="evidence" value="ECO:0007669"/>
    <property type="project" value="UniProtKB-SubCell"/>
</dbReference>
<dbReference type="GO" id="GO:0003954">
    <property type="term" value="F:NADH dehydrogenase activity"/>
    <property type="evidence" value="ECO:0007669"/>
    <property type="project" value="TreeGrafter"/>
</dbReference>
<dbReference type="GO" id="GO:0016655">
    <property type="term" value="F:oxidoreductase activity, acting on NAD(P)H, quinone or similar compound as acceptor"/>
    <property type="evidence" value="ECO:0007669"/>
    <property type="project" value="UniProtKB-UniRule"/>
</dbReference>
<dbReference type="GO" id="GO:0048038">
    <property type="term" value="F:quinone binding"/>
    <property type="evidence" value="ECO:0007669"/>
    <property type="project" value="UniProtKB-KW"/>
</dbReference>
<dbReference type="GO" id="GO:0009060">
    <property type="term" value="P:aerobic respiration"/>
    <property type="evidence" value="ECO:0007669"/>
    <property type="project" value="TreeGrafter"/>
</dbReference>
<dbReference type="HAMAP" id="MF_01350">
    <property type="entry name" value="NDH1_NuoH"/>
    <property type="match status" value="1"/>
</dbReference>
<dbReference type="InterPro" id="IPR001694">
    <property type="entry name" value="NADH_UbQ_OxRdtase_su1/FPO"/>
</dbReference>
<dbReference type="InterPro" id="IPR018086">
    <property type="entry name" value="NADH_UbQ_OxRdtase_su1_CS"/>
</dbReference>
<dbReference type="NCBIfam" id="NF004741">
    <property type="entry name" value="PRK06076.1-2"/>
    <property type="match status" value="1"/>
</dbReference>
<dbReference type="NCBIfam" id="NF004745">
    <property type="entry name" value="PRK06076.1-6"/>
    <property type="match status" value="1"/>
</dbReference>
<dbReference type="PANTHER" id="PTHR11432">
    <property type="entry name" value="NADH DEHYDROGENASE SUBUNIT 1"/>
    <property type="match status" value="1"/>
</dbReference>
<dbReference type="PANTHER" id="PTHR11432:SF3">
    <property type="entry name" value="NADH-UBIQUINONE OXIDOREDUCTASE CHAIN 1"/>
    <property type="match status" value="1"/>
</dbReference>
<dbReference type="Pfam" id="PF00146">
    <property type="entry name" value="NADHdh"/>
    <property type="match status" value="1"/>
</dbReference>
<dbReference type="PROSITE" id="PS00667">
    <property type="entry name" value="COMPLEX1_ND1_1"/>
    <property type="match status" value="1"/>
</dbReference>
<dbReference type="PROSITE" id="PS00668">
    <property type="entry name" value="COMPLEX1_ND1_2"/>
    <property type="match status" value="1"/>
</dbReference>
<keyword id="KW-0997">Cell inner membrane</keyword>
<keyword id="KW-1003">Cell membrane</keyword>
<keyword id="KW-0472">Membrane</keyword>
<keyword id="KW-0520">NAD</keyword>
<keyword id="KW-0874">Quinone</keyword>
<keyword id="KW-1278">Translocase</keyword>
<keyword id="KW-0812">Transmembrane</keyword>
<keyword id="KW-1133">Transmembrane helix</keyword>
<keyword id="KW-0830">Ubiquinone</keyword>
<proteinExistence type="inferred from homology"/>
<organism>
    <name type="scientific">Rickettsia typhi (strain ATCC VR-144 / Wilmington)</name>
    <dbReference type="NCBI Taxonomy" id="257363"/>
    <lineage>
        <taxon>Bacteria</taxon>
        <taxon>Pseudomonadati</taxon>
        <taxon>Pseudomonadota</taxon>
        <taxon>Alphaproteobacteria</taxon>
        <taxon>Rickettsiales</taxon>
        <taxon>Rickettsiaceae</taxon>
        <taxon>Rickettsieae</taxon>
        <taxon>Rickettsia</taxon>
        <taxon>typhus group</taxon>
    </lineage>
</organism>
<gene>
    <name evidence="1" type="primary">nuoH</name>
    <name type="ordered locus">RT0783</name>
</gene>
<reference key="1">
    <citation type="journal article" date="2004" name="J. Bacteriol.">
        <title>Complete genome sequence of Rickettsia typhi and comparison with sequences of other Rickettsiae.</title>
        <authorList>
            <person name="McLeod M.P."/>
            <person name="Qin X."/>
            <person name="Karpathy S.E."/>
            <person name="Gioia J."/>
            <person name="Highlander S.K."/>
            <person name="Fox G.E."/>
            <person name="McNeill T.Z."/>
            <person name="Jiang H."/>
            <person name="Muzny D."/>
            <person name="Jacob L.S."/>
            <person name="Hawes A.C."/>
            <person name="Sodergren E."/>
            <person name="Gill R."/>
            <person name="Hume J."/>
            <person name="Morgan M."/>
            <person name="Fan G."/>
            <person name="Amin A.G."/>
            <person name="Gibbs R.A."/>
            <person name="Hong C."/>
            <person name="Yu X.-J."/>
            <person name="Walker D.H."/>
            <person name="Weinstock G.M."/>
        </authorList>
    </citation>
    <scope>NUCLEOTIDE SEQUENCE [LARGE SCALE GENOMIC DNA]</scope>
    <source>
        <strain>ATCC VR-144 / Wilmington</strain>
    </source>
</reference>
<comment type="function">
    <text evidence="1">NDH-1 shuttles electrons from NADH, via FMN and iron-sulfur (Fe-S) centers, to quinones in the respiratory chain. The immediate electron acceptor for the enzyme in this species is believed to be ubiquinone. Couples the redox reaction to proton translocation (for every two electrons transferred, four hydrogen ions are translocated across the cytoplasmic membrane), and thus conserves the redox energy in a proton gradient. This subunit may bind ubiquinone.</text>
</comment>
<comment type="catalytic activity">
    <reaction evidence="1">
        <text>a quinone + NADH + 5 H(+)(in) = a quinol + NAD(+) + 4 H(+)(out)</text>
        <dbReference type="Rhea" id="RHEA:57888"/>
        <dbReference type="ChEBI" id="CHEBI:15378"/>
        <dbReference type="ChEBI" id="CHEBI:24646"/>
        <dbReference type="ChEBI" id="CHEBI:57540"/>
        <dbReference type="ChEBI" id="CHEBI:57945"/>
        <dbReference type="ChEBI" id="CHEBI:132124"/>
    </reaction>
</comment>
<comment type="subunit">
    <text evidence="1">NDH-1 is composed of 14 different subunits. Subunits NuoA, H, J, K, L, M, N constitute the membrane sector of the complex.</text>
</comment>
<comment type="subcellular location">
    <subcellularLocation>
        <location evidence="1">Cell inner membrane</location>
        <topology evidence="1">Multi-pass membrane protein</topology>
    </subcellularLocation>
</comment>
<comment type="similarity">
    <text evidence="1">Belongs to the complex I subunit 1 family.</text>
</comment>